<gene>
    <name type="primary">yqeI</name>
    <name type="ordered locus">BSU25650</name>
</gene>
<evidence type="ECO:0000255" key="1">
    <source>
        <dbReference type="PROSITE-ProRule" id="PRU00626"/>
    </source>
</evidence>
<accession>P54454</accession>
<protein>
    <recommendedName>
        <fullName>Probable RNA-binding protein YqeI</fullName>
    </recommendedName>
</protein>
<name>YQEI_BACSU</name>
<feature type="chain" id="PRO_0000202162" description="Probable RNA-binding protein YqeI">
    <location>
        <begin position="1"/>
        <end position="96"/>
    </location>
</feature>
<feature type="domain" description="CRM" evidence="1">
    <location>
        <begin position="1"/>
        <end position="96"/>
    </location>
</feature>
<sequence length="96" mass="10758">MLTGKQKRFLRSKAHHLTPIFQVGKGGVNDNMIKQIAEALEARELIKVSVLQNCEEDKNDVAEALVKGSRSQLVQTIGNTIVLYKESKENKQIELP</sequence>
<proteinExistence type="predicted"/>
<reference key="1">
    <citation type="journal article" date="1996" name="Microbiology">
        <title>Systematic sequencing of the 283 kb 210 degrees-232 degrees region of the Bacillus subtilis genome containing the skin element and many sporulation genes.</title>
        <authorList>
            <person name="Mizuno M."/>
            <person name="Masuda S."/>
            <person name="Takemaru K."/>
            <person name="Hosono S."/>
            <person name="Sato T."/>
            <person name="Takeuchi M."/>
            <person name="Kobayashi Y."/>
        </authorList>
    </citation>
    <scope>NUCLEOTIDE SEQUENCE [GENOMIC DNA]</scope>
    <source>
        <strain>168 / JH642</strain>
    </source>
</reference>
<reference key="2">
    <citation type="journal article" date="1997" name="Nature">
        <title>The complete genome sequence of the Gram-positive bacterium Bacillus subtilis.</title>
        <authorList>
            <person name="Kunst F."/>
            <person name="Ogasawara N."/>
            <person name="Moszer I."/>
            <person name="Albertini A.M."/>
            <person name="Alloni G."/>
            <person name="Azevedo V."/>
            <person name="Bertero M.G."/>
            <person name="Bessieres P."/>
            <person name="Bolotin A."/>
            <person name="Borchert S."/>
            <person name="Borriss R."/>
            <person name="Boursier L."/>
            <person name="Brans A."/>
            <person name="Braun M."/>
            <person name="Brignell S.C."/>
            <person name="Bron S."/>
            <person name="Brouillet S."/>
            <person name="Bruschi C.V."/>
            <person name="Caldwell B."/>
            <person name="Capuano V."/>
            <person name="Carter N.M."/>
            <person name="Choi S.-K."/>
            <person name="Codani J.-J."/>
            <person name="Connerton I.F."/>
            <person name="Cummings N.J."/>
            <person name="Daniel R.A."/>
            <person name="Denizot F."/>
            <person name="Devine K.M."/>
            <person name="Duesterhoeft A."/>
            <person name="Ehrlich S.D."/>
            <person name="Emmerson P.T."/>
            <person name="Entian K.-D."/>
            <person name="Errington J."/>
            <person name="Fabret C."/>
            <person name="Ferrari E."/>
            <person name="Foulger D."/>
            <person name="Fritz C."/>
            <person name="Fujita M."/>
            <person name="Fujita Y."/>
            <person name="Fuma S."/>
            <person name="Galizzi A."/>
            <person name="Galleron N."/>
            <person name="Ghim S.-Y."/>
            <person name="Glaser P."/>
            <person name="Goffeau A."/>
            <person name="Golightly E.J."/>
            <person name="Grandi G."/>
            <person name="Guiseppi G."/>
            <person name="Guy B.J."/>
            <person name="Haga K."/>
            <person name="Haiech J."/>
            <person name="Harwood C.R."/>
            <person name="Henaut A."/>
            <person name="Hilbert H."/>
            <person name="Holsappel S."/>
            <person name="Hosono S."/>
            <person name="Hullo M.-F."/>
            <person name="Itaya M."/>
            <person name="Jones L.-M."/>
            <person name="Joris B."/>
            <person name="Karamata D."/>
            <person name="Kasahara Y."/>
            <person name="Klaerr-Blanchard M."/>
            <person name="Klein C."/>
            <person name="Kobayashi Y."/>
            <person name="Koetter P."/>
            <person name="Koningstein G."/>
            <person name="Krogh S."/>
            <person name="Kumano M."/>
            <person name="Kurita K."/>
            <person name="Lapidus A."/>
            <person name="Lardinois S."/>
            <person name="Lauber J."/>
            <person name="Lazarevic V."/>
            <person name="Lee S.-M."/>
            <person name="Levine A."/>
            <person name="Liu H."/>
            <person name="Masuda S."/>
            <person name="Mauel C."/>
            <person name="Medigue C."/>
            <person name="Medina N."/>
            <person name="Mellado R.P."/>
            <person name="Mizuno M."/>
            <person name="Moestl D."/>
            <person name="Nakai S."/>
            <person name="Noback M."/>
            <person name="Noone D."/>
            <person name="O'Reilly M."/>
            <person name="Ogawa K."/>
            <person name="Ogiwara A."/>
            <person name="Oudega B."/>
            <person name="Park S.-H."/>
            <person name="Parro V."/>
            <person name="Pohl T.M."/>
            <person name="Portetelle D."/>
            <person name="Porwollik S."/>
            <person name="Prescott A.M."/>
            <person name="Presecan E."/>
            <person name="Pujic P."/>
            <person name="Purnelle B."/>
            <person name="Rapoport G."/>
            <person name="Rey M."/>
            <person name="Reynolds S."/>
            <person name="Rieger M."/>
            <person name="Rivolta C."/>
            <person name="Rocha E."/>
            <person name="Roche B."/>
            <person name="Rose M."/>
            <person name="Sadaie Y."/>
            <person name="Sato T."/>
            <person name="Scanlan E."/>
            <person name="Schleich S."/>
            <person name="Schroeter R."/>
            <person name="Scoffone F."/>
            <person name="Sekiguchi J."/>
            <person name="Sekowska A."/>
            <person name="Seror S.J."/>
            <person name="Serror P."/>
            <person name="Shin B.-S."/>
            <person name="Soldo B."/>
            <person name="Sorokin A."/>
            <person name="Tacconi E."/>
            <person name="Takagi T."/>
            <person name="Takahashi H."/>
            <person name="Takemaru K."/>
            <person name="Takeuchi M."/>
            <person name="Tamakoshi A."/>
            <person name="Tanaka T."/>
            <person name="Terpstra P."/>
            <person name="Tognoni A."/>
            <person name="Tosato V."/>
            <person name="Uchiyama S."/>
            <person name="Vandenbol M."/>
            <person name="Vannier F."/>
            <person name="Vassarotti A."/>
            <person name="Viari A."/>
            <person name="Wambutt R."/>
            <person name="Wedler E."/>
            <person name="Wedler H."/>
            <person name="Weitzenegger T."/>
            <person name="Winters P."/>
            <person name="Wipat A."/>
            <person name="Yamamoto H."/>
            <person name="Yamane K."/>
            <person name="Yasumoto K."/>
            <person name="Yata K."/>
            <person name="Yoshida K."/>
            <person name="Yoshikawa H.-F."/>
            <person name="Zumstein E."/>
            <person name="Yoshikawa H."/>
            <person name="Danchin A."/>
        </authorList>
    </citation>
    <scope>NUCLEOTIDE SEQUENCE [LARGE SCALE GENOMIC DNA]</scope>
    <source>
        <strain>168</strain>
    </source>
</reference>
<dbReference type="EMBL" id="D84432">
    <property type="protein sequence ID" value="BAA12446.1"/>
    <property type="molecule type" value="Genomic_DNA"/>
</dbReference>
<dbReference type="EMBL" id="AL009126">
    <property type="protein sequence ID" value="CAB14507.1"/>
    <property type="molecule type" value="Genomic_DNA"/>
</dbReference>
<dbReference type="PIR" id="E69951">
    <property type="entry name" value="E69951"/>
</dbReference>
<dbReference type="RefSeq" id="NP_390443.1">
    <property type="nucleotide sequence ID" value="NC_000964.3"/>
</dbReference>
<dbReference type="SMR" id="P54454"/>
<dbReference type="FunCoup" id="P54454">
    <property type="interactions" value="112"/>
</dbReference>
<dbReference type="STRING" id="224308.BSU25650"/>
<dbReference type="PaxDb" id="224308-BSU25650"/>
<dbReference type="EnsemblBacteria" id="CAB14507">
    <property type="protein sequence ID" value="CAB14507"/>
    <property type="gene ID" value="BSU_25650"/>
</dbReference>
<dbReference type="GeneID" id="937813"/>
<dbReference type="KEGG" id="bsu:BSU25650"/>
<dbReference type="PATRIC" id="fig|224308.179.peg.2788"/>
<dbReference type="eggNOG" id="COG1534">
    <property type="taxonomic scope" value="Bacteria"/>
</dbReference>
<dbReference type="InParanoid" id="P54454"/>
<dbReference type="OrthoDB" id="9797519at2"/>
<dbReference type="PhylomeDB" id="P54454"/>
<dbReference type="BioCyc" id="BSUB:BSU25650-MONOMER"/>
<dbReference type="Proteomes" id="UP000001570">
    <property type="component" value="Chromosome"/>
</dbReference>
<dbReference type="GO" id="GO:0003723">
    <property type="term" value="F:RNA binding"/>
    <property type="evidence" value="ECO:0007669"/>
    <property type="project" value="UniProtKB-KW"/>
</dbReference>
<dbReference type="Gene3D" id="3.30.110.60">
    <property type="entry name" value="YhbY-like"/>
    <property type="match status" value="1"/>
</dbReference>
<dbReference type="InterPro" id="IPR001890">
    <property type="entry name" value="RNA-binding_CRM"/>
</dbReference>
<dbReference type="InterPro" id="IPR051925">
    <property type="entry name" value="RNA-binding_domain"/>
</dbReference>
<dbReference type="InterPro" id="IPR017924">
    <property type="entry name" value="RNA-binding_YhbY"/>
</dbReference>
<dbReference type="InterPro" id="IPR035920">
    <property type="entry name" value="YhbY-like_sf"/>
</dbReference>
<dbReference type="NCBIfam" id="TIGR00253">
    <property type="entry name" value="RNA_bind_YhbY"/>
    <property type="match status" value="1"/>
</dbReference>
<dbReference type="PANTHER" id="PTHR40065">
    <property type="entry name" value="RNA-BINDING PROTEIN YHBY"/>
    <property type="match status" value="1"/>
</dbReference>
<dbReference type="PANTHER" id="PTHR40065:SF3">
    <property type="entry name" value="RNA-BINDING PROTEIN YHBY"/>
    <property type="match status" value="1"/>
</dbReference>
<dbReference type="Pfam" id="PF01985">
    <property type="entry name" value="CRS1_YhbY"/>
    <property type="match status" value="1"/>
</dbReference>
<dbReference type="SMART" id="SM01103">
    <property type="entry name" value="CRS1_YhbY"/>
    <property type="match status" value="1"/>
</dbReference>
<dbReference type="SUPFAM" id="SSF75471">
    <property type="entry name" value="YhbY-like"/>
    <property type="match status" value="1"/>
</dbReference>
<dbReference type="PROSITE" id="PS51295">
    <property type="entry name" value="CRM"/>
    <property type="match status" value="1"/>
</dbReference>
<organism>
    <name type="scientific">Bacillus subtilis (strain 168)</name>
    <dbReference type="NCBI Taxonomy" id="224308"/>
    <lineage>
        <taxon>Bacteria</taxon>
        <taxon>Bacillati</taxon>
        <taxon>Bacillota</taxon>
        <taxon>Bacilli</taxon>
        <taxon>Bacillales</taxon>
        <taxon>Bacillaceae</taxon>
        <taxon>Bacillus</taxon>
    </lineage>
</organism>
<keyword id="KW-1185">Reference proteome</keyword>
<keyword id="KW-0694">RNA-binding</keyword>